<reference key="1">
    <citation type="journal article" date="2002" name="J. Cell Biol.">
        <title>SadA, a novel adhesion receptor in Dictyostelium.</title>
        <authorList>
            <person name="Fey P."/>
            <person name="Stephens S."/>
            <person name="Titus M.A."/>
            <person name="Chisholm R.L."/>
        </authorList>
    </citation>
    <scope>NUCLEOTIDE SEQUENCE [GENOMIC DNA]</scope>
    <scope>FUNCTION</scope>
    <scope>SUBCELLULAR LOCATION</scope>
    <source>
        <strain>AX3</strain>
    </source>
</reference>
<reference key="2">
    <citation type="journal article" date="2005" name="Nature">
        <title>The genome of the social amoeba Dictyostelium discoideum.</title>
        <authorList>
            <person name="Eichinger L."/>
            <person name="Pachebat J.A."/>
            <person name="Gloeckner G."/>
            <person name="Rajandream M.A."/>
            <person name="Sucgang R."/>
            <person name="Berriman M."/>
            <person name="Song J."/>
            <person name="Olsen R."/>
            <person name="Szafranski K."/>
            <person name="Xu Q."/>
            <person name="Tunggal B."/>
            <person name="Kummerfeld S."/>
            <person name="Madera M."/>
            <person name="Konfortov B.A."/>
            <person name="Rivero F."/>
            <person name="Bankier A.T."/>
            <person name="Lehmann R."/>
            <person name="Hamlin N."/>
            <person name="Davies R."/>
            <person name="Gaudet P."/>
            <person name="Fey P."/>
            <person name="Pilcher K."/>
            <person name="Chen G."/>
            <person name="Saunders D."/>
            <person name="Sodergren E.J."/>
            <person name="Davis P."/>
            <person name="Kerhornou A."/>
            <person name="Nie X."/>
            <person name="Hall N."/>
            <person name="Anjard C."/>
            <person name="Hemphill L."/>
            <person name="Bason N."/>
            <person name="Farbrother P."/>
            <person name="Desany B."/>
            <person name="Just E."/>
            <person name="Morio T."/>
            <person name="Rost R."/>
            <person name="Churcher C.M."/>
            <person name="Cooper J."/>
            <person name="Haydock S."/>
            <person name="van Driessche N."/>
            <person name="Cronin A."/>
            <person name="Goodhead I."/>
            <person name="Muzny D.M."/>
            <person name="Mourier T."/>
            <person name="Pain A."/>
            <person name="Lu M."/>
            <person name="Harper D."/>
            <person name="Lindsay R."/>
            <person name="Hauser H."/>
            <person name="James K.D."/>
            <person name="Quiles M."/>
            <person name="Madan Babu M."/>
            <person name="Saito T."/>
            <person name="Buchrieser C."/>
            <person name="Wardroper A."/>
            <person name="Felder M."/>
            <person name="Thangavelu M."/>
            <person name="Johnson D."/>
            <person name="Knights A."/>
            <person name="Loulseged H."/>
            <person name="Mungall K.L."/>
            <person name="Oliver K."/>
            <person name="Price C."/>
            <person name="Quail M.A."/>
            <person name="Urushihara H."/>
            <person name="Hernandez J."/>
            <person name="Rabbinowitsch E."/>
            <person name="Steffen D."/>
            <person name="Sanders M."/>
            <person name="Ma J."/>
            <person name="Kohara Y."/>
            <person name="Sharp S."/>
            <person name="Simmonds M.N."/>
            <person name="Spiegler S."/>
            <person name="Tivey A."/>
            <person name="Sugano S."/>
            <person name="White B."/>
            <person name="Walker D."/>
            <person name="Woodward J.R."/>
            <person name="Winckler T."/>
            <person name="Tanaka Y."/>
            <person name="Shaulsky G."/>
            <person name="Schleicher M."/>
            <person name="Weinstock G.M."/>
            <person name="Rosenthal A."/>
            <person name="Cox E.C."/>
            <person name="Chisholm R.L."/>
            <person name="Gibbs R.A."/>
            <person name="Loomis W.F."/>
            <person name="Platzer M."/>
            <person name="Kay R.R."/>
            <person name="Williams J.G."/>
            <person name="Dear P.H."/>
            <person name="Noegel A.A."/>
            <person name="Barrell B.G."/>
            <person name="Kuspa A."/>
        </authorList>
    </citation>
    <scope>NUCLEOTIDE SEQUENCE [LARGE SCALE GENOMIC DNA]</scope>
    <source>
        <strain>AX4</strain>
    </source>
</reference>
<comment type="function">
    <text evidence="3">Involved in substrate adhesion, myosin-independent cytokinesis, organization of actin cytoskeleton, and phagocytosis.</text>
</comment>
<comment type="subcellular location">
    <subcellularLocation>
        <location evidence="4">Cell membrane</location>
        <topology evidence="4">Multi-pass membrane protein</topology>
    </subcellularLocation>
</comment>
<comment type="developmental stage">
    <text>Expressed during vegetative growth, but not in developing cells.</text>
</comment>
<sequence length="952" mass="104675">MKSQKIGSMILLIGILLAIFNFAYSDDDIERFSINPEKPISFTSDQPGFPTSADFPIGSILANSFYSFGGDVNYFQLNISLMEEFSKDGNTGSQATWNQYTSVPVSPISSAVTANRVYTMSIGSLNRVKKGDITSMESTDFLNDEKYSSLVTTLNGGVSYGDDVFFLSSKSATGEAVLIHINDTATGTFGTSSYDEILLDAAINDPSSITVDSKLGLAFIGDSDGDILVFNMTLKAKIAIYSNSSIANLRSSGVVDEERQLLYICGQAGGMNSYITQVDIFHYSATDITLLHSFTILGSLCPSAGIDVKGGQLFFSTTTSSGSQLIGTDTSGGNTGSLSENIANTQSVAISVDSITKTISVFYPDSVFYGTFKSICPSDCSGHGECNYGTCVCDHNYQGQGCEEELCLTLNNCTGTDNGKCENGFCYCSSEWEGAQCEIRRCKDSCNGYGTCNTANYTCVCDSAHMGETCNELVPPPPCTYYTDSESCLSRTTCGWCEVDGLCKEGDRYGPFEGFCRTWFFDTNVETGVIALACIFIAFVGILYIIDIGTTVPIDIKRAKDYAEENKSGQFPKATHEEASVLWWRDQRSHKAWTFMDQFQLISLVSHIGVVFPSRFISFTEYLDWSNLGIPLPPSINPPQIWSVPTDWTSNTARTILSMAQYENSLGSGDLYLLPNILFWFGLLLGVFLVPLLLAYAIISFMESLIHWKEVVTNRLIHVLVRILTFGYIGVLIAASFAMVTPLHDYRIIIPGAIIFVLYGIGLPIAIWFLLAVPEARLHNPTFKQRFGCLYVHYKPKTDHRFVVFMFIKRFIMAVIIGILSFKPMTNYPLTGTDLAVPIVQVVVIDIALIGYAVLLFIRKPYFDHYQLWLEYLLTAINIVTVSLSLTHIKSPSAAGELIACLIQALALVACIAAYVVAWLQMRSSFIKKVKKYLCCCCKSSKSSGEIDLSKK</sequence>
<gene>
    <name type="primary">sadA</name>
    <name type="ORF">DDB_G0288511</name>
</gene>
<organism>
    <name type="scientific">Dictyostelium discoideum</name>
    <name type="common">Social amoeba</name>
    <dbReference type="NCBI Taxonomy" id="44689"/>
    <lineage>
        <taxon>Eukaryota</taxon>
        <taxon>Amoebozoa</taxon>
        <taxon>Evosea</taxon>
        <taxon>Eumycetozoa</taxon>
        <taxon>Dictyostelia</taxon>
        <taxon>Dictyosteliales</taxon>
        <taxon>Dictyosteliaceae</taxon>
        <taxon>Dictyostelium</taxon>
    </lineage>
</organism>
<proteinExistence type="evidence at transcript level"/>
<protein>
    <recommendedName>
        <fullName>Substrate-adhesion molecule</fullName>
    </recommendedName>
</protein>
<feature type="signal peptide" evidence="1">
    <location>
        <begin position="1"/>
        <end position="25"/>
    </location>
</feature>
<feature type="chain" id="PRO_5000089299" description="Substrate-adhesion molecule">
    <location>
        <begin position="26"/>
        <end position="952"/>
    </location>
</feature>
<feature type="topological domain" description="Extracellular" evidence="1">
    <location>
        <begin position="26"/>
        <end position="527"/>
    </location>
</feature>
<feature type="transmembrane region" description="Helical" evidence="1">
    <location>
        <begin position="528"/>
        <end position="548"/>
    </location>
</feature>
<feature type="topological domain" description="Cytoplasmic" evidence="1">
    <location>
        <begin position="549"/>
        <end position="591"/>
    </location>
</feature>
<feature type="transmembrane region" description="Helical" evidence="1">
    <location>
        <begin position="592"/>
        <end position="612"/>
    </location>
</feature>
<feature type="topological domain" description="Extracellular" evidence="1">
    <location>
        <begin position="613"/>
        <end position="678"/>
    </location>
</feature>
<feature type="transmembrane region" description="Helical" evidence="1">
    <location>
        <begin position="679"/>
        <end position="699"/>
    </location>
</feature>
<feature type="topological domain" description="Cytoplasmic" evidence="1">
    <location>
        <begin position="700"/>
        <end position="722"/>
    </location>
</feature>
<feature type="transmembrane region" description="Helical" evidence="1">
    <location>
        <begin position="723"/>
        <end position="743"/>
    </location>
</feature>
<feature type="topological domain" description="Extracellular" evidence="1">
    <location>
        <begin position="744"/>
        <end position="752"/>
    </location>
</feature>
<feature type="transmembrane region" description="Helical" evidence="1">
    <location>
        <begin position="753"/>
        <end position="773"/>
    </location>
</feature>
<feature type="topological domain" description="Cytoplasmic" evidence="1">
    <location>
        <begin position="774"/>
        <end position="801"/>
    </location>
</feature>
<feature type="transmembrane region" description="Helical" evidence="1">
    <location>
        <begin position="802"/>
        <end position="822"/>
    </location>
</feature>
<feature type="topological domain" description="Extracellular" evidence="1">
    <location>
        <begin position="823"/>
        <end position="837"/>
    </location>
</feature>
<feature type="transmembrane region" description="Helical" evidence="1">
    <location>
        <begin position="838"/>
        <end position="858"/>
    </location>
</feature>
<feature type="topological domain" description="Cytoplasmic" evidence="1">
    <location>
        <begin position="859"/>
        <end position="868"/>
    </location>
</feature>
<feature type="transmembrane region" description="Helical" evidence="1">
    <location>
        <begin position="869"/>
        <end position="889"/>
    </location>
</feature>
<feature type="topological domain" description="Extracellular" evidence="1">
    <location>
        <begin position="890"/>
        <end position="897"/>
    </location>
</feature>
<feature type="transmembrane region" description="Helical" evidence="1">
    <location>
        <begin position="898"/>
        <end position="918"/>
    </location>
</feature>
<feature type="topological domain" description="Cytoplasmic" evidence="1">
    <location>
        <begin position="919"/>
        <end position="952"/>
    </location>
</feature>
<feature type="domain" description="EGF-like" evidence="2">
    <location>
        <begin position="438"/>
        <end position="471"/>
    </location>
</feature>
<feature type="glycosylation site" description="N-linked (GlcNAc...) asparagine" evidence="1">
    <location>
        <position position="78"/>
    </location>
</feature>
<feature type="glycosylation site" description="N-linked (GlcNAc...) asparagine" evidence="1">
    <location>
        <position position="182"/>
    </location>
</feature>
<feature type="glycosylation site" description="N-linked (GlcNAc...) asparagine" evidence="1">
    <location>
        <position position="231"/>
    </location>
</feature>
<feature type="glycosylation site" description="N-linked (GlcNAc...) asparagine" evidence="1">
    <location>
        <position position="243"/>
    </location>
</feature>
<feature type="glycosylation site" description="N-linked (GlcNAc...) asparagine" evidence="1">
    <location>
        <position position="412"/>
    </location>
</feature>
<feature type="glycosylation site" description="N-linked (GlcNAc...) asparagine" evidence="1">
    <location>
        <position position="456"/>
    </location>
</feature>
<feature type="disulfide bond" evidence="2">
    <location>
        <begin position="442"/>
        <end position="452"/>
    </location>
</feature>
<feature type="disulfide bond" evidence="2">
    <location>
        <begin position="446"/>
        <end position="459"/>
    </location>
</feature>
<feature type="disulfide bond" evidence="2">
    <location>
        <begin position="461"/>
        <end position="470"/>
    </location>
</feature>
<keyword id="KW-0130">Cell adhesion</keyword>
<keyword id="KW-1003">Cell membrane</keyword>
<keyword id="KW-1015">Disulfide bond</keyword>
<keyword id="KW-0245">EGF-like domain</keyword>
<keyword id="KW-0325">Glycoprotein</keyword>
<keyword id="KW-0472">Membrane</keyword>
<keyword id="KW-0581">Phagocytosis</keyword>
<keyword id="KW-1185">Reference proteome</keyword>
<keyword id="KW-0732">Signal</keyword>
<keyword id="KW-0812">Transmembrane</keyword>
<keyword id="KW-1133">Transmembrane helix</keyword>
<evidence type="ECO:0000255" key="1"/>
<evidence type="ECO:0000255" key="2">
    <source>
        <dbReference type="PROSITE-ProRule" id="PRU00076"/>
    </source>
</evidence>
<evidence type="ECO:0000269" key="3">
    <source>
    </source>
</evidence>
<evidence type="ECO:0000305" key="4"/>
<name>SADA_DICDI</name>
<accession>Q8I7T3</accession>
<accession>Q54IT9</accession>
<dbReference type="EMBL" id="AY178767">
    <property type="protein sequence ID" value="AAO13155.1"/>
    <property type="molecule type" value="Genomic_DNA"/>
</dbReference>
<dbReference type="EMBL" id="AAFI02000114">
    <property type="protein sequence ID" value="EAL63177.1"/>
    <property type="molecule type" value="Genomic_DNA"/>
</dbReference>
<dbReference type="RefSeq" id="XP_636687.1">
    <property type="nucleotide sequence ID" value="XM_631595.1"/>
</dbReference>
<dbReference type="FunCoup" id="Q8I7T3">
    <property type="interactions" value="66"/>
</dbReference>
<dbReference type="STRING" id="44689.Q8I7T3"/>
<dbReference type="GlyCosmos" id="Q8I7T3">
    <property type="glycosylation" value="6 sites, No reported glycans"/>
</dbReference>
<dbReference type="GlyGen" id="Q8I7T3">
    <property type="glycosylation" value="6 sites"/>
</dbReference>
<dbReference type="PaxDb" id="44689-DDB0191090"/>
<dbReference type="EnsemblProtists" id="EAL63177">
    <property type="protein sequence ID" value="EAL63177"/>
    <property type="gene ID" value="DDB_G0288511"/>
</dbReference>
<dbReference type="GeneID" id="8626671"/>
<dbReference type="KEGG" id="ddi:DDB_G0288511"/>
<dbReference type="dictyBase" id="DDB_G0288511">
    <property type="gene designation" value="sadA"/>
</dbReference>
<dbReference type="VEuPathDB" id="AmoebaDB:DDB_G0288511"/>
<dbReference type="eggNOG" id="KOG1225">
    <property type="taxonomic scope" value="Eukaryota"/>
</dbReference>
<dbReference type="HOGENOM" id="CLU_309604_0_0_1"/>
<dbReference type="InParanoid" id="Q8I7T3"/>
<dbReference type="OMA" id="RKPYFDH"/>
<dbReference type="Reactome" id="R-DDI-114608">
    <property type="pathway name" value="Platelet degranulation"/>
</dbReference>
<dbReference type="Reactome" id="R-DDI-1474228">
    <property type="pathway name" value="Degradation of the extracellular matrix"/>
</dbReference>
<dbReference type="Reactome" id="R-DDI-1566977">
    <property type="pathway name" value="Fibronectin matrix formation"/>
</dbReference>
<dbReference type="Reactome" id="R-DDI-2129379">
    <property type="pathway name" value="Molecules associated with elastic fibres"/>
</dbReference>
<dbReference type="Reactome" id="R-DDI-3000178">
    <property type="pathway name" value="ECM proteoglycans"/>
</dbReference>
<dbReference type="PRO" id="PR:Q8I7T3"/>
<dbReference type="Proteomes" id="UP000002195">
    <property type="component" value="Chromosome 5"/>
</dbReference>
<dbReference type="GO" id="GO:0005886">
    <property type="term" value="C:plasma membrane"/>
    <property type="evidence" value="ECO:0000314"/>
    <property type="project" value="dictyBase"/>
</dbReference>
<dbReference type="GO" id="GO:0007015">
    <property type="term" value="P:actin filament organization"/>
    <property type="evidence" value="ECO:0000315"/>
    <property type="project" value="dictyBase"/>
</dbReference>
<dbReference type="GO" id="GO:0000902">
    <property type="term" value="P:cell morphogenesis"/>
    <property type="evidence" value="ECO:0000315"/>
    <property type="project" value="dictyBase"/>
</dbReference>
<dbReference type="GO" id="GO:0031589">
    <property type="term" value="P:cell-substrate adhesion"/>
    <property type="evidence" value="ECO:0000315"/>
    <property type="project" value="dictyBase"/>
</dbReference>
<dbReference type="GO" id="GO:0000281">
    <property type="term" value="P:mitotic cytokinesis"/>
    <property type="evidence" value="ECO:0000315"/>
    <property type="project" value="dictyBase"/>
</dbReference>
<dbReference type="GO" id="GO:0006909">
    <property type="term" value="P:phagocytosis"/>
    <property type="evidence" value="ECO:0000315"/>
    <property type="project" value="dictyBase"/>
</dbReference>
<dbReference type="GO" id="GO:0034394">
    <property type="term" value="P:protein localization to cell surface"/>
    <property type="evidence" value="ECO:0000315"/>
    <property type="project" value="dictyBase"/>
</dbReference>
<dbReference type="GO" id="GO:0050821">
    <property type="term" value="P:protein stabilization"/>
    <property type="evidence" value="ECO:0000315"/>
    <property type="project" value="dictyBase"/>
</dbReference>
<dbReference type="CDD" id="cd00055">
    <property type="entry name" value="EGF_Lam"/>
    <property type="match status" value="1"/>
</dbReference>
<dbReference type="Gene3D" id="2.10.25.10">
    <property type="entry name" value="Laminin"/>
    <property type="match status" value="1"/>
</dbReference>
<dbReference type="InterPro" id="IPR050969">
    <property type="entry name" value="Dev_Signal_Modulators"/>
</dbReference>
<dbReference type="InterPro" id="IPR000742">
    <property type="entry name" value="EGF-like_dom"/>
</dbReference>
<dbReference type="InterPro" id="IPR013111">
    <property type="entry name" value="EGF_extracell"/>
</dbReference>
<dbReference type="InterPro" id="IPR002049">
    <property type="entry name" value="LE_dom"/>
</dbReference>
<dbReference type="PANTHER" id="PTHR14949:SF56">
    <property type="entry name" value="EGF-LIKE-DOMAIN, MULTIPLE 7"/>
    <property type="match status" value="1"/>
</dbReference>
<dbReference type="PANTHER" id="PTHR14949">
    <property type="entry name" value="EGF-LIKE-DOMAIN, MULTIPLE 7, 8"/>
    <property type="match status" value="1"/>
</dbReference>
<dbReference type="Pfam" id="PF07974">
    <property type="entry name" value="EGF_2"/>
    <property type="match status" value="1"/>
</dbReference>
<dbReference type="Pfam" id="PF23106">
    <property type="entry name" value="EGF_Teneurin"/>
    <property type="match status" value="1"/>
</dbReference>
<dbReference type="SUPFAM" id="SSF63825">
    <property type="entry name" value="YWTD domain"/>
    <property type="match status" value="1"/>
</dbReference>
<dbReference type="PROSITE" id="PS00022">
    <property type="entry name" value="EGF_1"/>
    <property type="match status" value="3"/>
</dbReference>
<dbReference type="PROSITE" id="PS50026">
    <property type="entry name" value="EGF_3"/>
    <property type="match status" value="1"/>
</dbReference>